<organism>
    <name type="scientific">Theileria parva</name>
    <name type="common">East coast fever infection agent</name>
    <dbReference type="NCBI Taxonomy" id="5875"/>
    <lineage>
        <taxon>Eukaryota</taxon>
        <taxon>Sar</taxon>
        <taxon>Alveolata</taxon>
        <taxon>Apicomplexa</taxon>
        <taxon>Aconoidasida</taxon>
        <taxon>Piroplasmida</taxon>
        <taxon>Theileriidae</taxon>
        <taxon>Theileria</taxon>
    </lineage>
</organism>
<keyword id="KW-0067">ATP-binding</keyword>
<keyword id="KW-0131">Cell cycle</keyword>
<keyword id="KW-0132">Cell division</keyword>
<keyword id="KW-0963">Cytoplasm</keyword>
<keyword id="KW-0418">Kinase</keyword>
<keyword id="KW-0460">Magnesium</keyword>
<keyword id="KW-0479">Metal-binding</keyword>
<keyword id="KW-0498">Mitosis</keyword>
<keyword id="KW-0547">Nucleotide-binding</keyword>
<keyword id="KW-0597">Phosphoprotein</keyword>
<keyword id="KW-1185">Reference proteome</keyword>
<keyword id="KW-0723">Serine/threonine-protein kinase</keyword>
<keyword id="KW-0808">Transferase</keyword>
<reference key="1">
    <citation type="journal article" date="1996" name="Mol. Microbiol.">
        <title>The isolation and characterisation of genomic and cDNA clones coding for a cdc2-related kinase (ThCRK2) from the bovine protozoan parasite Theileria.</title>
        <authorList>
            <person name="Kinnaird J.H."/>
            <person name="Logan M."/>
            <person name="Kirvar E."/>
            <person name="Tait A."/>
            <person name="Carrington M."/>
        </authorList>
    </citation>
    <scope>NUCLEOTIDE SEQUENCE [GENOMIC DNA]</scope>
    <source>
        <strain>Muguga</strain>
    </source>
</reference>
<reference key="2">
    <citation type="journal article" date="2005" name="Science">
        <title>Genome sequence of Theileria parva, a bovine pathogen that transforms lymphocytes.</title>
        <authorList>
            <person name="Gardner M.J."/>
            <person name="Bishop R."/>
            <person name="Shah T."/>
            <person name="de Villiers E.P."/>
            <person name="Carlton J.M."/>
            <person name="Hall N."/>
            <person name="Ren Q."/>
            <person name="Paulsen I.T."/>
            <person name="Pain A."/>
            <person name="Berriman M."/>
            <person name="Wilson R.J.M."/>
            <person name="Sato S."/>
            <person name="Ralph S.A."/>
            <person name="Mann D.J."/>
            <person name="Xiong Z."/>
            <person name="Shallom S.J."/>
            <person name="Weidman J."/>
            <person name="Jiang L."/>
            <person name="Lynn J."/>
            <person name="Weaver B."/>
            <person name="Shoaibi A."/>
            <person name="Domingo A.R."/>
            <person name="Wasawo D."/>
            <person name="Crabtree J."/>
            <person name="Wortman J.R."/>
            <person name="Haas B."/>
            <person name="Angiuoli S.V."/>
            <person name="Creasy T.H."/>
            <person name="Lu C."/>
            <person name="Suh B."/>
            <person name="Silva J.C."/>
            <person name="Utterback T.R."/>
            <person name="Feldblyum T.V."/>
            <person name="Pertea M."/>
            <person name="Allen J."/>
            <person name="Nierman W.C."/>
            <person name="Taracha E.L.N."/>
            <person name="Salzberg S.L."/>
            <person name="White O.R."/>
            <person name="Fitzhugh H.A."/>
            <person name="Morzaria S."/>
            <person name="Venter J.C."/>
            <person name="Fraser C.M."/>
            <person name="Nene V."/>
        </authorList>
    </citation>
    <scope>NUCLEOTIDE SEQUENCE [LARGE SCALE GENOMIC DNA]</scope>
    <source>
        <strain>Muguga</strain>
    </source>
</reference>
<accession>Q27032</accession>
<gene>
    <name evidence="6" type="primary">CRK2</name>
    <name type="ordered locus">TP01_0728</name>
</gene>
<protein>
    <recommendedName>
        <fullName evidence="7">Cyclin-dependent kinase 2 homolog</fullName>
        <ecNumber evidence="3">2.7.11.22</ecNumber>
        <ecNumber evidence="3">2.7.11.23</ecNumber>
    </recommendedName>
    <alternativeName>
        <fullName evidence="3">Cell division control protein 2 homolog</fullName>
    </alternativeName>
    <alternativeName>
        <fullName evidence="6">cdc2-related kinase 2</fullName>
    </alternativeName>
</protein>
<proteinExistence type="inferred from homology"/>
<name>CDK2H_THEPA</name>
<comment type="function">
    <text evidence="1 3">Serine/threonine-protein kinase (By similarity). Involved in the control of the cell cycle. Required for entry into S-phase and mitosis (By similarity). Probable component of the kinase complex that phosphorylates the repetitive C-terminus of RNA polymerase II (By similarity).</text>
</comment>
<comment type="catalytic activity">
    <reaction evidence="3">
        <text>L-seryl-[protein] + ATP = O-phospho-L-seryl-[protein] + ADP + H(+)</text>
        <dbReference type="Rhea" id="RHEA:17989"/>
        <dbReference type="Rhea" id="RHEA-COMP:9863"/>
        <dbReference type="Rhea" id="RHEA-COMP:11604"/>
        <dbReference type="ChEBI" id="CHEBI:15378"/>
        <dbReference type="ChEBI" id="CHEBI:29999"/>
        <dbReference type="ChEBI" id="CHEBI:30616"/>
        <dbReference type="ChEBI" id="CHEBI:83421"/>
        <dbReference type="ChEBI" id="CHEBI:456216"/>
        <dbReference type="EC" id="2.7.11.22"/>
    </reaction>
</comment>
<comment type="catalytic activity">
    <reaction evidence="3">
        <text>L-threonyl-[protein] + ATP = O-phospho-L-threonyl-[protein] + ADP + H(+)</text>
        <dbReference type="Rhea" id="RHEA:46608"/>
        <dbReference type="Rhea" id="RHEA-COMP:11060"/>
        <dbReference type="Rhea" id="RHEA-COMP:11605"/>
        <dbReference type="ChEBI" id="CHEBI:15378"/>
        <dbReference type="ChEBI" id="CHEBI:30013"/>
        <dbReference type="ChEBI" id="CHEBI:30616"/>
        <dbReference type="ChEBI" id="CHEBI:61977"/>
        <dbReference type="ChEBI" id="CHEBI:456216"/>
        <dbReference type="EC" id="2.7.11.22"/>
    </reaction>
</comment>
<comment type="catalytic activity">
    <reaction evidence="3">
        <text>[DNA-directed RNA polymerase] + ATP = phospho-[DNA-directed RNA polymerase] + ADP + H(+)</text>
        <dbReference type="Rhea" id="RHEA:10216"/>
        <dbReference type="Rhea" id="RHEA-COMP:11321"/>
        <dbReference type="Rhea" id="RHEA-COMP:11322"/>
        <dbReference type="ChEBI" id="CHEBI:15378"/>
        <dbReference type="ChEBI" id="CHEBI:30616"/>
        <dbReference type="ChEBI" id="CHEBI:43176"/>
        <dbReference type="ChEBI" id="CHEBI:68546"/>
        <dbReference type="ChEBI" id="CHEBI:456216"/>
        <dbReference type="EC" id="2.7.11.23"/>
    </reaction>
</comment>
<comment type="cofactor">
    <cofactor evidence="3">
        <name>Mg(2+)</name>
        <dbReference type="ChEBI" id="CHEBI:18420"/>
    </cofactor>
</comment>
<comment type="activity regulation">
    <text evidence="2">Phosphorylation at Thr-14 or Tyr-15 inactivates the enzyme, while phosphorylation at Thr-158 activates it.</text>
</comment>
<comment type="subunit">
    <text evidence="3">May form a complex composed of at least the catalytic subunit CRK2 and a cyclin.</text>
</comment>
<comment type="subcellular location">
    <subcellularLocation>
        <location evidence="1">Cytoplasm</location>
    </subcellularLocation>
</comment>
<comment type="similarity">
    <text evidence="7">Belongs to the protein kinase superfamily. CMGC Ser/Thr protein kinase family. CDC2/CDKX subfamily.</text>
</comment>
<sequence length="298" mass="34213">MRRYHKMEKIGEGTYGVVYKAQNNHGEICALKKIRVEEEDEGIPSTAIREISLLKELHHPNIVWLRDVIHSEKCLTLVFEYLDQDLKKLLDACDGGLEPTTAKSFLYQILRGISYCHDHRILHRDLKPQNLLINREGVLKLADFGLARAFAIPVRSYTHEVVTLWYRAPDVLMGSKKYSTAVDIWSVGCIFAEMINGVPLFPGISEQDQLKRIFKILGTPSVDSWPQVVNLPAYNPDFSYYEKQSWSSIVPKLNESGIDLISRMLQLDPVQRISAKEALKHDYFKDLHRPPEFLNGVH</sequence>
<evidence type="ECO:0000250" key="1">
    <source>
        <dbReference type="UniProtKB" id="P04551"/>
    </source>
</evidence>
<evidence type="ECO:0000250" key="2">
    <source>
        <dbReference type="UniProtKB" id="P24941"/>
    </source>
</evidence>
<evidence type="ECO:0000250" key="3">
    <source>
        <dbReference type="UniProtKB" id="P61075"/>
    </source>
</evidence>
<evidence type="ECO:0000255" key="4">
    <source>
        <dbReference type="PROSITE-ProRule" id="PRU00159"/>
    </source>
</evidence>
<evidence type="ECO:0000255" key="5">
    <source>
        <dbReference type="PROSITE-ProRule" id="PRU10027"/>
    </source>
</evidence>
<evidence type="ECO:0000303" key="6">
    <source>
    </source>
</evidence>
<evidence type="ECO:0000305" key="7"/>
<feature type="chain" id="PRO_0000232674" description="Cyclin-dependent kinase 2 homolog">
    <location>
        <begin position="1"/>
        <end position="298"/>
    </location>
</feature>
<feature type="domain" description="Protein kinase" evidence="4">
    <location>
        <begin position="4"/>
        <end position="284"/>
    </location>
</feature>
<feature type="active site" description="Proton acceptor" evidence="4 5">
    <location>
        <position position="125"/>
    </location>
</feature>
<feature type="binding site" evidence="4">
    <location>
        <begin position="10"/>
        <end position="18"/>
    </location>
    <ligand>
        <name>ATP</name>
        <dbReference type="ChEBI" id="CHEBI:30616"/>
    </ligand>
</feature>
<feature type="binding site" evidence="4">
    <location>
        <position position="32"/>
    </location>
    <ligand>
        <name>ATP</name>
        <dbReference type="ChEBI" id="CHEBI:30616"/>
    </ligand>
</feature>
<feature type="modified residue" description="Phosphothreonine" evidence="2">
    <location>
        <position position="14"/>
    </location>
</feature>
<feature type="modified residue" description="Phosphotyrosine" evidence="2">
    <location>
        <position position="15"/>
    </location>
</feature>
<feature type="modified residue" description="Phosphothreonine" evidence="2">
    <location>
        <position position="158"/>
    </location>
</feature>
<dbReference type="EC" id="2.7.11.22" evidence="3"/>
<dbReference type="EC" id="2.7.11.23" evidence="3"/>
<dbReference type="EMBL" id="X98824">
    <property type="protein sequence ID" value="CAA67342.1"/>
    <property type="molecule type" value="Genomic_DNA"/>
</dbReference>
<dbReference type="EMBL" id="AAGK01000001">
    <property type="protein sequence ID" value="EAN33966.1"/>
    <property type="molecule type" value="Genomic_DNA"/>
</dbReference>
<dbReference type="RefSeq" id="XP_766249.1">
    <property type="nucleotide sequence ID" value="XM_761156.1"/>
</dbReference>
<dbReference type="SMR" id="Q27032"/>
<dbReference type="FunCoup" id="Q27032">
    <property type="interactions" value="215"/>
</dbReference>
<dbReference type="STRING" id="5875.Q27032"/>
<dbReference type="EnsemblProtists" id="EAN33966">
    <property type="protein sequence ID" value="EAN33966"/>
    <property type="gene ID" value="TP01_0728"/>
</dbReference>
<dbReference type="GeneID" id="3503486"/>
<dbReference type="KEGG" id="tpv:TP01_0728"/>
<dbReference type="VEuPathDB" id="PiroplasmaDB:TpMuguga_01g00728"/>
<dbReference type="eggNOG" id="KOG0594">
    <property type="taxonomic scope" value="Eukaryota"/>
</dbReference>
<dbReference type="InParanoid" id="Q27032"/>
<dbReference type="OMA" id="YLYQITR"/>
<dbReference type="Proteomes" id="UP000001949">
    <property type="component" value="Unassembled WGS sequence"/>
</dbReference>
<dbReference type="GO" id="GO:0005737">
    <property type="term" value="C:cytoplasm"/>
    <property type="evidence" value="ECO:0007669"/>
    <property type="project" value="UniProtKB-SubCell"/>
</dbReference>
<dbReference type="GO" id="GO:0005634">
    <property type="term" value="C:nucleus"/>
    <property type="evidence" value="ECO:0007669"/>
    <property type="project" value="TreeGrafter"/>
</dbReference>
<dbReference type="GO" id="GO:0005524">
    <property type="term" value="F:ATP binding"/>
    <property type="evidence" value="ECO:0007669"/>
    <property type="project" value="UniProtKB-KW"/>
</dbReference>
<dbReference type="GO" id="GO:0004693">
    <property type="term" value="F:cyclin-dependent protein serine/threonine kinase activity"/>
    <property type="evidence" value="ECO:0007669"/>
    <property type="project" value="UniProtKB-EC"/>
</dbReference>
<dbReference type="GO" id="GO:0046872">
    <property type="term" value="F:metal ion binding"/>
    <property type="evidence" value="ECO:0007669"/>
    <property type="project" value="UniProtKB-KW"/>
</dbReference>
<dbReference type="GO" id="GO:0106310">
    <property type="term" value="F:protein serine kinase activity"/>
    <property type="evidence" value="ECO:0007669"/>
    <property type="project" value="RHEA"/>
</dbReference>
<dbReference type="GO" id="GO:0008353">
    <property type="term" value="F:RNA polymerase II CTD heptapeptide repeat kinase activity"/>
    <property type="evidence" value="ECO:0007669"/>
    <property type="project" value="UniProtKB-EC"/>
</dbReference>
<dbReference type="GO" id="GO:0051301">
    <property type="term" value="P:cell division"/>
    <property type="evidence" value="ECO:0007669"/>
    <property type="project" value="UniProtKB-KW"/>
</dbReference>
<dbReference type="CDD" id="cd07829">
    <property type="entry name" value="STKc_CDK_like"/>
    <property type="match status" value="1"/>
</dbReference>
<dbReference type="FunFam" id="3.30.200.20:FF:000396">
    <property type="entry name" value="Cdc2-related kinase 2, putative"/>
    <property type="match status" value="1"/>
</dbReference>
<dbReference type="FunFam" id="1.10.510.10:FF:000184">
    <property type="entry name" value="cyclin-dependent kinase 5 homolog"/>
    <property type="match status" value="1"/>
</dbReference>
<dbReference type="Gene3D" id="3.30.200.20">
    <property type="entry name" value="Phosphorylase Kinase, domain 1"/>
    <property type="match status" value="1"/>
</dbReference>
<dbReference type="Gene3D" id="1.10.510.10">
    <property type="entry name" value="Transferase(Phosphotransferase) domain 1"/>
    <property type="match status" value="1"/>
</dbReference>
<dbReference type="InterPro" id="IPR050108">
    <property type="entry name" value="CDK"/>
</dbReference>
<dbReference type="InterPro" id="IPR011009">
    <property type="entry name" value="Kinase-like_dom_sf"/>
</dbReference>
<dbReference type="InterPro" id="IPR000719">
    <property type="entry name" value="Prot_kinase_dom"/>
</dbReference>
<dbReference type="InterPro" id="IPR017441">
    <property type="entry name" value="Protein_kinase_ATP_BS"/>
</dbReference>
<dbReference type="InterPro" id="IPR008271">
    <property type="entry name" value="Ser/Thr_kinase_AS"/>
</dbReference>
<dbReference type="PANTHER" id="PTHR24056">
    <property type="entry name" value="CELL DIVISION PROTEIN KINASE"/>
    <property type="match status" value="1"/>
</dbReference>
<dbReference type="PANTHER" id="PTHR24056:SF46">
    <property type="entry name" value="CYCLIN-DEPENDENT KINASE 5"/>
    <property type="match status" value="1"/>
</dbReference>
<dbReference type="Pfam" id="PF00069">
    <property type="entry name" value="Pkinase"/>
    <property type="match status" value="1"/>
</dbReference>
<dbReference type="SMART" id="SM00220">
    <property type="entry name" value="S_TKc"/>
    <property type="match status" value="1"/>
</dbReference>
<dbReference type="SUPFAM" id="SSF56112">
    <property type="entry name" value="Protein kinase-like (PK-like)"/>
    <property type="match status" value="1"/>
</dbReference>
<dbReference type="PROSITE" id="PS00107">
    <property type="entry name" value="PROTEIN_KINASE_ATP"/>
    <property type="match status" value="1"/>
</dbReference>
<dbReference type="PROSITE" id="PS50011">
    <property type="entry name" value="PROTEIN_KINASE_DOM"/>
    <property type="match status" value="1"/>
</dbReference>
<dbReference type="PROSITE" id="PS00108">
    <property type="entry name" value="PROTEIN_KINASE_ST"/>
    <property type="match status" value="1"/>
</dbReference>